<feature type="chain" id="PRO_1000149246" description="2-isopropylmalate synthase">
    <location>
        <begin position="1"/>
        <end position="546"/>
    </location>
</feature>
<feature type="domain" description="Pyruvate carboxyltransferase" evidence="1">
    <location>
        <begin position="8"/>
        <end position="271"/>
    </location>
</feature>
<feature type="region of interest" description="Regulatory domain" evidence="1">
    <location>
        <begin position="408"/>
        <end position="546"/>
    </location>
</feature>
<feature type="binding site" evidence="1">
    <location>
        <position position="17"/>
    </location>
    <ligand>
        <name>Mn(2+)</name>
        <dbReference type="ChEBI" id="CHEBI:29035"/>
    </ligand>
</feature>
<feature type="binding site" evidence="1">
    <location>
        <position position="208"/>
    </location>
    <ligand>
        <name>Mn(2+)</name>
        <dbReference type="ChEBI" id="CHEBI:29035"/>
    </ligand>
</feature>
<feature type="binding site" evidence="1">
    <location>
        <position position="210"/>
    </location>
    <ligand>
        <name>Mn(2+)</name>
        <dbReference type="ChEBI" id="CHEBI:29035"/>
    </ligand>
</feature>
<feature type="binding site" evidence="1">
    <location>
        <position position="244"/>
    </location>
    <ligand>
        <name>Mn(2+)</name>
        <dbReference type="ChEBI" id="CHEBI:29035"/>
    </ligand>
</feature>
<gene>
    <name evidence="1" type="primary">leuA</name>
    <name type="ordered locus">PMT9312_1077</name>
</gene>
<dbReference type="EC" id="2.3.3.13" evidence="1"/>
<dbReference type="EMBL" id="CP000111">
    <property type="protein sequence ID" value="ABB50136.1"/>
    <property type="molecule type" value="Genomic_DNA"/>
</dbReference>
<dbReference type="RefSeq" id="WP_011376627.1">
    <property type="nucleotide sequence ID" value="NC_007577.1"/>
</dbReference>
<dbReference type="SMR" id="Q31AF9"/>
<dbReference type="STRING" id="74546.PMT9312_1077"/>
<dbReference type="KEGG" id="pmi:PMT9312_1077"/>
<dbReference type="eggNOG" id="COG0119">
    <property type="taxonomic scope" value="Bacteria"/>
</dbReference>
<dbReference type="HOGENOM" id="CLU_022158_0_1_3"/>
<dbReference type="OrthoDB" id="9804858at2"/>
<dbReference type="UniPathway" id="UPA00048">
    <property type="reaction ID" value="UER00070"/>
</dbReference>
<dbReference type="Proteomes" id="UP000002715">
    <property type="component" value="Chromosome"/>
</dbReference>
<dbReference type="GO" id="GO:0005737">
    <property type="term" value="C:cytoplasm"/>
    <property type="evidence" value="ECO:0007669"/>
    <property type="project" value="UniProtKB-SubCell"/>
</dbReference>
<dbReference type="GO" id="GO:0003852">
    <property type="term" value="F:2-isopropylmalate synthase activity"/>
    <property type="evidence" value="ECO:0007669"/>
    <property type="project" value="UniProtKB-UniRule"/>
</dbReference>
<dbReference type="GO" id="GO:0003985">
    <property type="term" value="F:acetyl-CoA C-acetyltransferase activity"/>
    <property type="evidence" value="ECO:0007669"/>
    <property type="project" value="UniProtKB-UniRule"/>
</dbReference>
<dbReference type="GO" id="GO:0030145">
    <property type="term" value="F:manganese ion binding"/>
    <property type="evidence" value="ECO:0007669"/>
    <property type="project" value="UniProtKB-UniRule"/>
</dbReference>
<dbReference type="GO" id="GO:0009098">
    <property type="term" value="P:L-leucine biosynthetic process"/>
    <property type="evidence" value="ECO:0007669"/>
    <property type="project" value="UniProtKB-UniRule"/>
</dbReference>
<dbReference type="CDD" id="cd07940">
    <property type="entry name" value="DRE_TIM_IPMS"/>
    <property type="match status" value="1"/>
</dbReference>
<dbReference type="FunFam" id="1.10.238.260:FF:000001">
    <property type="entry name" value="2-isopropylmalate synthase"/>
    <property type="match status" value="1"/>
</dbReference>
<dbReference type="FunFam" id="3.20.20.70:FF:000010">
    <property type="entry name" value="2-isopropylmalate synthase"/>
    <property type="match status" value="1"/>
</dbReference>
<dbReference type="Gene3D" id="1.10.238.260">
    <property type="match status" value="1"/>
</dbReference>
<dbReference type="Gene3D" id="3.30.160.270">
    <property type="match status" value="1"/>
</dbReference>
<dbReference type="Gene3D" id="3.20.20.70">
    <property type="entry name" value="Aldolase class I"/>
    <property type="match status" value="1"/>
</dbReference>
<dbReference type="HAMAP" id="MF_01025">
    <property type="entry name" value="LeuA_type1"/>
    <property type="match status" value="1"/>
</dbReference>
<dbReference type="InterPro" id="IPR050073">
    <property type="entry name" value="2-IPM_HCS-like"/>
</dbReference>
<dbReference type="InterPro" id="IPR013709">
    <property type="entry name" value="2-isopropylmalate_synth_dimer"/>
</dbReference>
<dbReference type="InterPro" id="IPR002034">
    <property type="entry name" value="AIPM/Hcit_synth_CS"/>
</dbReference>
<dbReference type="InterPro" id="IPR013785">
    <property type="entry name" value="Aldolase_TIM"/>
</dbReference>
<dbReference type="InterPro" id="IPR054691">
    <property type="entry name" value="LeuA/HCS_post-cat"/>
</dbReference>
<dbReference type="InterPro" id="IPR036230">
    <property type="entry name" value="LeuA_allosteric_dom_sf"/>
</dbReference>
<dbReference type="InterPro" id="IPR005671">
    <property type="entry name" value="LeuA_bact_synth"/>
</dbReference>
<dbReference type="InterPro" id="IPR000891">
    <property type="entry name" value="PYR_CT"/>
</dbReference>
<dbReference type="NCBIfam" id="TIGR00973">
    <property type="entry name" value="leuA_bact"/>
    <property type="match status" value="1"/>
</dbReference>
<dbReference type="NCBIfam" id="NF002086">
    <property type="entry name" value="PRK00915.1-3"/>
    <property type="match status" value="1"/>
</dbReference>
<dbReference type="PANTHER" id="PTHR10277:SF9">
    <property type="entry name" value="2-ISOPROPYLMALATE SYNTHASE 1, CHLOROPLASTIC-RELATED"/>
    <property type="match status" value="1"/>
</dbReference>
<dbReference type="PANTHER" id="PTHR10277">
    <property type="entry name" value="HOMOCITRATE SYNTHASE-RELATED"/>
    <property type="match status" value="1"/>
</dbReference>
<dbReference type="Pfam" id="PF22617">
    <property type="entry name" value="HCS_D2"/>
    <property type="match status" value="1"/>
</dbReference>
<dbReference type="Pfam" id="PF00682">
    <property type="entry name" value="HMGL-like"/>
    <property type="match status" value="1"/>
</dbReference>
<dbReference type="Pfam" id="PF08502">
    <property type="entry name" value="LeuA_dimer"/>
    <property type="match status" value="1"/>
</dbReference>
<dbReference type="SMART" id="SM00917">
    <property type="entry name" value="LeuA_dimer"/>
    <property type="match status" value="1"/>
</dbReference>
<dbReference type="SUPFAM" id="SSF110921">
    <property type="entry name" value="2-isopropylmalate synthase LeuA, allosteric (dimerisation) domain"/>
    <property type="match status" value="1"/>
</dbReference>
<dbReference type="SUPFAM" id="SSF51569">
    <property type="entry name" value="Aldolase"/>
    <property type="match status" value="1"/>
</dbReference>
<dbReference type="PROSITE" id="PS00815">
    <property type="entry name" value="AIPM_HOMOCIT_SYNTH_1"/>
    <property type="match status" value="1"/>
</dbReference>
<dbReference type="PROSITE" id="PS00816">
    <property type="entry name" value="AIPM_HOMOCIT_SYNTH_2"/>
    <property type="match status" value="1"/>
</dbReference>
<dbReference type="PROSITE" id="PS50991">
    <property type="entry name" value="PYR_CT"/>
    <property type="match status" value="1"/>
</dbReference>
<sequence length="546" mass="59253">MSKDPGRILIFDTTLRDGEQSPGASLNLEEKLAIAHQLARLGVDVIEAGFPFASPGDFKAVNKISNDVGKENGPIICGLARASKGDIKACYEAVSPAPKKRIHTFIATSDIHLKHKLKKSRKDVLQIVPEMVNYAKTLVEDIEFSCEDASRSDPDFLYEVIQLAISAGATTINIPDTVGFTTPSEFGKLISDINKNVPNIDEAVISVHGHNDLGLAVANFLEAVKNGARQLECTINGIGERAGNASLEELVMALHVRKSFFNSFFKRNPDSPTPLTAIRTEEITKTSRLVSNLTGMTVQPNKAIVGANAFAHESGIHQDGVLKNRLTYEIIDAKTVGLSDNKISLGKLSGRSAVRARLEEMGYDLSREDLNDAFARFKDLADRKREITDRDLEAIVSEQVQLPEAKFQLCLVQVSCGNASKPTATITLLNTADNTEDTAVSVGTGPVDAVCEALNKLAKVPNELIEFSVKSVTEGIDALGEVTIRIRRDNKIYSGHSADTDVVVAAANAYVNALNRLVFSEKKNSIHPQFDNLENSNKTFLSNPAN</sequence>
<organism>
    <name type="scientific">Prochlorococcus marinus (strain MIT 9312)</name>
    <dbReference type="NCBI Taxonomy" id="74546"/>
    <lineage>
        <taxon>Bacteria</taxon>
        <taxon>Bacillati</taxon>
        <taxon>Cyanobacteriota</taxon>
        <taxon>Cyanophyceae</taxon>
        <taxon>Synechococcales</taxon>
        <taxon>Prochlorococcaceae</taxon>
        <taxon>Prochlorococcus</taxon>
    </lineage>
</organism>
<name>LEU1_PROM9</name>
<accession>Q31AF9</accession>
<reference key="1">
    <citation type="journal article" date="2006" name="Science">
        <title>Genomic islands and the ecology and evolution of Prochlorococcus.</title>
        <authorList>
            <person name="Coleman M.L."/>
            <person name="Sullivan M.B."/>
            <person name="Martiny A.C."/>
            <person name="Steglich C."/>
            <person name="Barry K."/>
            <person name="Delong E.F."/>
            <person name="Chisholm S.W."/>
        </authorList>
    </citation>
    <scope>NUCLEOTIDE SEQUENCE [LARGE SCALE GENOMIC DNA]</scope>
    <source>
        <strain>MIT 9312</strain>
    </source>
</reference>
<protein>
    <recommendedName>
        <fullName evidence="1">2-isopropylmalate synthase</fullName>
        <ecNumber evidence="1">2.3.3.13</ecNumber>
    </recommendedName>
    <alternativeName>
        <fullName evidence="1">Alpha-IPM synthase</fullName>
    </alternativeName>
    <alternativeName>
        <fullName evidence="1">Alpha-isopropylmalate synthase</fullName>
    </alternativeName>
</protein>
<evidence type="ECO:0000255" key="1">
    <source>
        <dbReference type="HAMAP-Rule" id="MF_01025"/>
    </source>
</evidence>
<keyword id="KW-0028">Amino-acid biosynthesis</keyword>
<keyword id="KW-0100">Branched-chain amino acid biosynthesis</keyword>
<keyword id="KW-0963">Cytoplasm</keyword>
<keyword id="KW-0432">Leucine biosynthesis</keyword>
<keyword id="KW-0464">Manganese</keyword>
<keyword id="KW-0479">Metal-binding</keyword>
<keyword id="KW-0808">Transferase</keyword>
<comment type="function">
    <text evidence="1">Catalyzes the condensation of the acetyl group of acetyl-CoA with 3-methyl-2-oxobutanoate (2-ketoisovalerate) to form 3-carboxy-3-hydroxy-4-methylpentanoate (2-isopropylmalate).</text>
</comment>
<comment type="catalytic activity">
    <reaction evidence="1">
        <text>3-methyl-2-oxobutanoate + acetyl-CoA + H2O = (2S)-2-isopropylmalate + CoA + H(+)</text>
        <dbReference type="Rhea" id="RHEA:21524"/>
        <dbReference type="ChEBI" id="CHEBI:1178"/>
        <dbReference type="ChEBI" id="CHEBI:11851"/>
        <dbReference type="ChEBI" id="CHEBI:15377"/>
        <dbReference type="ChEBI" id="CHEBI:15378"/>
        <dbReference type="ChEBI" id="CHEBI:57287"/>
        <dbReference type="ChEBI" id="CHEBI:57288"/>
        <dbReference type="EC" id="2.3.3.13"/>
    </reaction>
</comment>
<comment type="cofactor">
    <cofactor evidence="1">
        <name>Mn(2+)</name>
        <dbReference type="ChEBI" id="CHEBI:29035"/>
    </cofactor>
</comment>
<comment type="pathway">
    <text evidence="1">Amino-acid biosynthesis; L-leucine biosynthesis; L-leucine from 3-methyl-2-oxobutanoate: step 1/4.</text>
</comment>
<comment type="subunit">
    <text evidence="1">Homodimer.</text>
</comment>
<comment type="subcellular location">
    <subcellularLocation>
        <location evidence="1">Cytoplasm</location>
    </subcellularLocation>
</comment>
<comment type="similarity">
    <text evidence="1">Belongs to the alpha-IPM synthase/homocitrate synthase family. LeuA type 1 subfamily.</text>
</comment>
<proteinExistence type="inferred from homology"/>